<dbReference type="GO" id="GO:0005737">
    <property type="term" value="C:cytoplasm"/>
    <property type="evidence" value="ECO:0007669"/>
    <property type="project" value="UniProtKB-SubCell"/>
</dbReference>
<dbReference type="GO" id="GO:0009360">
    <property type="term" value="C:DNA polymerase III complex"/>
    <property type="evidence" value="ECO:0007669"/>
    <property type="project" value="InterPro"/>
</dbReference>
<dbReference type="GO" id="GO:0008408">
    <property type="term" value="F:3'-5' exonuclease activity"/>
    <property type="evidence" value="ECO:0007669"/>
    <property type="project" value="InterPro"/>
</dbReference>
<dbReference type="GO" id="GO:0003677">
    <property type="term" value="F:DNA binding"/>
    <property type="evidence" value="ECO:0007669"/>
    <property type="project" value="UniProtKB-KW"/>
</dbReference>
<dbReference type="GO" id="GO:0003887">
    <property type="term" value="F:DNA-directed DNA polymerase activity"/>
    <property type="evidence" value="ECO:0007669"/>
    <property type="project" value="UniProtKB-KW"/>
</dbReference>
<dbReference type="GO" id="GO:0006271">
    <property type="term" value="P:DNA strand elongation involved in DNA replication"/>
    <property type="evidence" value="ECO:0007669"/>
    <property type="project" value="TreeGrafter"/>
</dbReference>
<dbReference type="Gene3D" id="3.10.150.10">
    <property type="entry name" value="DNA Polymerase III, subunit A, domain 2"/>
    <property type="match status" value="1"/>
</dbReference>
<dbReference type="InterPro" id="IPR046938">
    <property type="entry name" value="DNA_clamp_sf"/>
</dbReference>
<dbReference type="InterPro" id="IPR001001">
    <property type="entry name" value="DNA_polIII_beta"/>
</dbReference>
<dbReference type="InterPro" id="IPR022637">
    <property type="entry name" value="DNA_polIII_beta_cen"/>
</dbReference>
<dbReference type="PANTHER" id="PTHR30478:SF0">
    <property type="entry name" value="BETA SLIDING CLAMP"/>
    <property type="match status" value="1"/>
</dbReference>
<dbReference type="PANTHER" id="PTHR30478">
    <property type="entry name" value="DNA POLYMERASE III SUBUNIT BETA"/>
    <property type="match status" value="1"/>
</dbReference>
<dbReference type="Pfam" id="PF02767">
    <property type="entry name" value="DNA_pol3_beta_2"/>
    <property type="match status" value="1"/>
</dbReference>
<dbReference type="SUPFAM" id="SSF55979">
    <property type="entry name" value="DNA clamp"/>
    <property type="match status" value="1"/>
</dbReference>
<name>DPO3B_RHOCA</name>
<protein>
    <recommendedName>
        <fullName>Beta sliding clamp</fullName>
        <shortName>Beta clamp</shortName>
        <shortName>Sliding clamp</shortName>
    </recommendedName>
    <alternativeName>
        <fullName>Beta-clamp processivity factor</fullName>
    </alternativeName>
    <alternativeName>
        <fullName>DNA polymerase III beta sliding clamp subunit</fullName>
    </alternativeName>
    <alternativeName>
        <fullName>DNA polymerase III subunit beta</fullName>
    </alternativeName>
</protein>
<organism>
    <name type="scientific">Rhodobacter capsulatus</name>
    <name type="common">Rhodopseudomonas capsulata</name>
    <dbReference type="NCBI Taxonomy" id="1061"/>
    <lineage>
        <taxon>Bacteria</taxon>
        <taxon>Pseudomonadati</taxon>
        <taxon>Pseudomonadota</taxon>
        <taxon>Alphaproteobacteria</taxon>
        <taxon>Rhodobacterales</taxon>
        <taxon>Rhodobacter group</taxon>
        <taxon>Rhodobacter</taxon>
    </lineage>
</organism>
<proteinExistence type="inferred from homology"/>
<accession>P31861</accession>
<feature type="chain" id="PRO_0000105456" description="Beta sliding clamp">
    <location>
        <begin position="1" status="less than"/>
        <end position="70" status="greater than"/>
    </location>
</feature>
<feature type="non-terminal residue">
    <location>
        <position position="1"/>
    </location>
</feature>
<feature type="non-terminal residue">
    <location>
        <position position="70"/>
    </location>
</feature>
<gene>
    <name type="primary">dnaN</name>
</gene>
<evidence type="ECO:0000250" key="1">
    <source>
        <dbReference type="UniProtKB" id="P0A988"/>
    </source>
</evidence>
<evidence type="ECO:0000305" key="2"/>
<keyword id="KW-0963">Cytoplasm</keyword>
<keyword id="KW-0235">DNA replication</keyword>
<keyword id="KW-0238">DNA-binding</keyword>
<keyword id="KW-0239">DNA-directed DNA polymerase</keyword>
<keyword id="KW-0548">Nucleotidyltransferase</keyword>
<keyword id="KW-0808">Transferase</keyword>
<reference key="1">
    <citation type="journal article" date="1992" name="FEMS Microbiol. Lett.">
        <title>DNA gyrase activities from Rhodobacter capsulatus: analysis of target(s) of coumarins and cloning of the gyrB locus.</title>
        <authorList>
            <person name="Kranz R.G."/>
            <person name="Beckman D.L."/>
            <person name="Foster-Hartnett D."/>
        </authorList>
    </citation>
    <scope>NUCLEOTIDE SEQUENCE [GENOMIC DNA]</scope>
</reference>
<comment type="function">
    <text evidence="1">Confers DNA tethering and processivity to DNA polymerases and other proteins. Acts as a clamp, forming a ring around DNA (a reaction catalyzed by the clamp-loading complex) which diffuses in an ATP-independent manner freely and bidirectionally along dsDNA. Initially characterized for its ability to contact the catalytic subunit of DNA polymerase III (Pol III), a complex, multichain enzyme responsible for most of the replicative synthesis in bacteria; Pol III exhibits 3'-5' exonuclease proofreading activity. The beta chain is required for initiation of replication as well as for processivity of DNA replication.</text>
</comment>
<comment type="subunit">
    <text evidence="1">Forms a ring-shaped head-to-tail homodimer around DNA which binds and tethers DNA polymerases and other proteins to the DNA. The DNA replisome complex has a single clamp-loading complex (3 tau and 1 each of delta, delta', psi and chi subunits) which binds 3 Pol III cores (1 core on the leading strand and 2 on the lagging strand) each with a beta sliding clamp dimer. Additional proteins in the replisome are other copies of gamma, psi and chi, Ssb, DNA helicase and RNA primase.</text>
</comment>
<comment type="subcellular location">
    <subcellularLocation>
        <location evidence="1">Cytoplasm</location>
    </subcellularLocation>
</comment>
<comment type="similarity">
    <text evidence="2">Belongs to the beta sliding clamp family.</text>
</comment>
<sequence>MWRPAKXPALRCVATDGHRLARIDAVLPEGANGMPGVIVPRKTVNELRNVLDDDEAQIAVSVSETRCALA</sequence>